<organism>
    <name type="scientific">Shewanella sp. (strain W3-18-1)</name>
    <dbReference type="NCBI Taxonomy" id="351745"/>
    <lineage>
        <taxon>Bacteria</taxon>
        <taxon>Pseudomonadati</taxon>
        <taxon>Pseudomonadota</taxon>
        <taxon>Gammaproteobacteria</taxon>
        <taxon>Alteromonadales</taxon>
        <taxon>Shewanellaceae</taxon>
        <taxon>Shewanella</taxon>
    </lineage>
</organism>
<protein>
    <recommendedName>
        <fullName evidence="1">Alanine--tRNA ligase</fullName>
        <ecNumber evidence="1">6.1.1.7</ecNumber>
    </recommendedName>
    <alternativeName>
        <fullName evidence="1">Alanyl-tRNA synthetase</fullName>
        <shortName evidence="1">AlaRS</shortName>
    </alternativeName>
</protein>
<keyword id="KW-0030">Aminoacyl-tRNA synthetase</keyword>
<keyword id="KW-0067">ATP-binding</keyword>
<keyword id="KW-0963">Cytoplasm</keyword>
<keyword id="KW-0436">Ligase</keyword>
<keyword id="KW-0479">Metal-binding</keyword>
<keyword id="KW-0547">Nucleotide-binding</keyword>
<keyword id="KW-0648">Protein biosynthesis</keyword>
<keyword id="KW-0694">RNA-binding</keyword>
<keyword id="KW-0820">tRNA-binding</keyword>
<keyword id="KW-0862">Zinc</keyword>
<sequence length="874" mass="94811">MYQTTAELRSAFLEFFRSHGHQVVDSSSLVPGNDPTLLFTNAGMNQFKDVFLGMDKRNYTRATTAQRCVRAGGKHNDLDNVGYTARHHTFFEMLGNFSFGDYFKEEAICFGWSFLTETLKLPKERLCVTIYQTDDEAFEIWNKKIGVAAENIIRIGDNKGAPYASDNFWQMGDTGPCGPCTEIFYDHGDHIWGGRPGSPEEDGDRFIEIWNIVFMQYNRHISGEMLPLPKPSVDTGMGIERIAAIMQGVHSNYEIDIFRALIAKAAEIIGVTDLSNKSLRVIADHIRSCAFLVADGVMPSNEGRGYVLRRIIRRAVRHGNKLGATEAFFYKLVPTLIDVMGDAAKGLAETQVIVEKALKAEEEQFARTLERGLGILDAALSELTGDTLDGETVFKLYDTYGFPMDLTADVCRERNIIVDEAGFEAAMAEQRSRAQAAGNFGADYNAALKIDAETAFCGYTELVGQAKVTAIYQNGESVTAIKAGDEAVLVLDVTPFYAESGGQVGDKGQLVANGIEFTVNDTQKYGQATGHQGVLVAGSLSIGQMVEAKVDKKLRHRTQLNHSVTHLLHAALRQVLGTHVTQKGSLVDPERLRFDFSHFEAVKPAELKKVEELVNTQIRRNHELKVAEMAIDEAKEKGAMALFGEKYDAQVRVVTMGDFSIELCGGTHVGRTGDIGLFKITSEGGIAAGVRRIEAVTGAAAMAYVAQQQAELEEAAALLKGDTHSVVAKLKAQLDKMKQLEKDMAQLKDKLAAAASADLVGDAVVVNGVNVLIKKLDGVEAGSLRGLQDELKQKLKSAIIVLGTAQEGKVNLIAGVSNDLVGKVKAGELVAMVAAQVGGKGGGRPDMAQAGGSQPENLDAALAQVLPWITERLA</sequence>
<gene>
    <name evidence="1" type="primary">alaS</name>
    <name type="ordered locus">Sputw3181_1267</name>
</gene>
<dbReference type="EC" id="6.1.1.7" evidence="1"/>
<dbReference type="EMBL" id="CP000503">
    <property type="protein sequence ID" value="ABM24110.1"/>
    <property type="status" value="ALT_INIT"/>
    <property type="molecule type" value="Genomic_DNA"/>
</dbReference>
<dbReference type="RefSeq" id="WP_041408349.1">
    <property type="nucleotide sequence ID" value="NC_008750.1"/>
</dbReference>
<dbReference type="SMR" id="A1RHG5"/>
<dbReference type="KEGG" id="shw:Sputw3181_1267"/>
<dbReference type="HOGENOM" id="CLU_004485_1_1_6"/>
<dbReference type="Proteomes" id="UP000002597">
    <property type="component" value="Chromosome"/>
</dbReference>
<dbReference type="GO" id="GO:0005829">
    <property type="term" value="C:cytosol"/>
    <property type="evidence" value="ECO:0007669"/>
    <property type="project" value="TreeGrafter"/>
</dbReference>
<dbReference type="GO" id="GO:0004813">
    <property type="term" value="F:alanine-tRNA ligase activity"/>
    <property type="evidence" value="ECO:0007669"/>
    <property type="project" value="UniProtKB-UniRule"/>
</dbReference>
<dbReference type="GO" id="GO:0002161">
    <property type="term" value="F:aminoacyl-tRNA deacylase activity"/>
    <property type="evidence" value="ECO:0007669"/>
    <property type="project" value="TreeGrafter"/>
</dbReference>
<dbReference type="GO" id="GO:0005524">
    <property type="term" value="F:ATP binding"/>
    <property type="evidence" value="ECO:0007669"/>
    <property type="project" value="UniProtKB-UniRule"/>
</dbReference>
<dbReference type="GO" id="GO:0000049">
    <property type="term" value="F:tRNA binding"/>
    <property type="evidence" value="ECO:0007669"/>
    <property type="project" value="UniProtKB-KW"/>
</dbReference>
<dbReference type="GO" id="GO:0008270">
    <property type="term" value="F:zinc ion binding"/>
    <property type="evidence" value="ECO:0007669"/>
    <property type="project" value="UniProtKB-UniRule"/>
</dbReference>
<dbReference type="GO" id="GO:0006419">
    <property type="term" value="P:alanyl-tRNA aminoacylation"/>
    <property type="evidence" value="ECO:0007669"/>
    <property type="project" value="UniProtKB-UniRule"/>
</dbReference>
<dbReference type="GO" id="GO:0045892">
    <property type="term" value="P:negative regulation of DNA-templated transcription"/>
    <property type="evidence" value="ECO:0007669"/>
    <property type="project" value="TreeGrafter"/>
</dbReference>
<dbReference type="CDD" id="cd00673">
    <property type="entry name" value="AlaRS_core"/>
    <property type="match status" value="1"/>
</dbReference>
<dbReference type="FunFam" id="2.40.30.130:FF:000001">
    <property type="entry name" value="Alanine--tRNA ligase"/>
    <property type="match status" value="1"/>
</dbReference>
<dbReference type="FunFam" id="3.10.310.40:FF:000001">
    <property type="entry name" value="Alanine--tRNA ligase"/>
    <property type="match status" value="1"/>
</dbReference>
<dbReference type="FunFam" id="3.30.54.20:FF:000001">
    <property type="entry name" value="Alanine--tRNA ligase"/>
    <property type="match status" value="1"/>
</dbReference>
<dbReference type="FunFam" id="3.30.930.10:FF:000004">
    <property type="entry name" value="Alanine--tRNA ligase"/>
    <property type="match status" value="1"/>
</dbReference>
<dbReference type="FunFam" id="3.30.980.10:FF:000004">
    <property type="entry name" value="Alanine--tRNA ligase, cytoplasmic"/>
    <property type="match status" value="1"/>
</dbReference>
<dbReference type="Gene3D" id="2.40.30.130">
    <property type="match status" value="1"/>
</dbReference>
<dbReference type="Gene3D" id="3.10.310.40">
    <property type="match status" value="1"/>
</dbReference>
<dbReference type="Gene3D" id="3.30.54.20">
    <property type="match status" value="1"/>
</dbReference>
<dbReference type="Gene3D" id="6.10.250.550">
    <property type="match status" value="1"/>
</dbReference>
<dbReference type="Gene3D" id="3.30.930.10">
    <property type="entry name" value="Bira Bifunctional Protein, Domain 2"/>
    <property type="match status" value="1"/>
</dbReference>
<dbReference type="Gene3D" id="3.30.980.10">
    <property type="entry name" value="Threonyl-trna Synthetase, Chain A, domain 2"/>
    <property type="match status" value="1"/>
</dbReference>
<dbReference type="HAMAP" id="MF_00036_B">
    <property type="entry name" value="Ala_tRNA_synth_B"/>
    <property type="match status" value="1"/>
</dbReference>
<dbReference type="InterPro" id="IPR045864">
    <property type="entry name" value="aa-tRNA-synth_II/BPL/LPL"/>
</dbReference>
<dbReference type="InterPro" id="IPR002318">
    <property type="entry name" value="Ala-tRNA-lgiase_IIc"/>
</dbReference>
<dbReference type="InterPro" id="IPR018162">
    <property type="entry name" value="Ala-tRNA-ligase_IIc_anticod-bd"/>
</dbReference>
<dbReference type="InterPro" id="IPR018165">
    <property type="entry name" value="Ala-tRNA-synth_IIc_core"/>
</dbReference>
<dbReference type="InterPro" id="IPR018164">
    <property type="entry name" value="Ala-tRNA-synth_IIc_N"/>
</dbReference>
<dbReference type="InterPro" id="IPR050058">
    <property type="entry name" value="Ala-tRNA_ligase"/>
</dbReference>
<dbReference type="InterPro" id="IPR023033">
    <property type="entry name" value="Ala_tRNA_ligase_euk/bac"/>
</dbReference>
<dbReference type="InterPro" id="IPR003156">
    <property type="entry name" value="DHHA1_dom"/>
</dbReference>
<dbReference type="InterPro" id="IPR018163">
    <property type="entry name" value="Thr/Ala-tRNA-synth_IIc_edit"/>
</dbReference>
<dbReference type="InterPro" id="IPR009000">
    <property type="entry name" value="Transl_B-barrel_sf"/>
</dbReference>
<dbReference type="InterPro" id="IPR012947">
    <property type="entry name" value="tRNA_SAD"/>
</dbReference>
<dbReference type="NCBIfam" id="TIGR00344">
    <property type="entry name" value="alaS"/>
    <property type="match status" value="1"/>
</dbReference>
<dbReference type="PANTHER" id="PTHR11777:SF9">
    <property type="entry name" value="ALANINE--TRNA LIGASE, CYTOPLASMIC"/>
    <property type="match status" value="1"/>
</dbReference>
<dbReference type="PANTHER" id="PTHR11777">
    <property type="entry name" value="ALANYL-TRNA SYNTHETASE"/>
    <property type="match status" value="1"/>
</dbReference>
<dbReference type="Pfam" id="PF02272">
    <property type="entry name" value="DHHA1"/>
    <property type="match status" value="1"/>
</dbReference>
<dbReference type="Pfam" id="PF01411">
    <property type="entry name" value="tRNA-synt_2c"/>
    <property type="match status" value="1"/>
</dbReference>
<dbReference type="Pfam" id="PF07973">
    <property type="entry name" value="tRNA_SAD"/>
    <property type="match status" value="1"/>
</dbReference>
<dbReference type="PRINTS" id="PR00980">
    <property type="entry name" value="TRNASYNTHALA"/>
</dbReference>
<dbReference type="SMART" id="SM00863">
    <property type="entry name" value="tRNA_SAD"/>
    <property type="match status" value="1"/>
</dbReference>
<dbReference type="SUPFAM" id="SSF55681">
    <property type="entry name" value="Class II aaRS and biotin synthetases"/>
    <property type="match status" value="1"/>
</dbReference>
<dbReference type="SUPFAM" id="SSF101353">
    <property type="entry name" value="Putative anticodon-binding domain of alanyl-tRNA synthetase (AlaRS)"/>
    <property type="match status" value="1"/>
</dbReference>
<dbReference type="SUPFAM" id="SSF55186">
    <property type="entry name" value="ThrRS/AlaRS common domain"/>
    <property type="match status" value="1"/>
</dbReference>
<dbReference type="SUPFAM" id="SSF50447">
    <property type="entry name" value="Translation proteins"/>
    <property type="match status" value="1"/>
</dbReference>
<dbReference type="PROSITE" id="PS50860">
    <property type="entry name" value="AA_TRNA_LIGASE_II_ALA"/>
    <property type="match status" value="1"/>
</dbReference>
<evidence type="ECO:0000255" key="1">
    <source>
        <dbReference type="HAMAP-Rule" id="MF_00036"/>
    </source>
</evidence>
<evidence type="ECO:0000305" key="2"/>
<name>SYA_SHESW</name>
<proteinExistence type="inferred from homology"/>
<reference key="1">
    <citation type="submission" date="2006-12" db="EMBL/GenBank/DDBJ databases">
        <title>Complete sequence of Shewanella sp. W3-18-1.</title>
        <authorList>
            <consortium name="US DOE Joint Genome Institute"/>
            <person name="Copeland A."/>
            <person name="Lucas S."/>
            <person name="Lapidus A."/>
            <person name="Barry K."/>
            <person name="Detter J.C."/>
            <person name="Glavina del Rio T."/>
            <person name="Hammon N."/>
            <person name="Israni S."/>
            <person name="Dalin E."/>
            <person name="Tice H."/>
            <person name="Pitluck S."/>
            <person name="Chain P."/>
            <person name="Malfatti S."/>
            <person name="Shin M."/>
            <person name="Vergez L."/>
            <person name="Schmutz J."/>
            <person name="Larimer F."/>
            <person name="Land M."/>
            <person name="Hauser L."/>
            <person name="Kyrpides N."/>
            <person name="Lykidis A."/>
            <person name="Tiedje J."/>
            <person name="Richardson P."/>
        </authorList>
    </citation>
    <scope>NUCLEOTIDE SEQUENCE [LARGE SCALE GENOMIC DNA]</scope>
    <source>
        <strain>W3-18-1</strain>
    </source>
</reference>
<comment type="function">
    <text evidence="1">Catalyzes the attachment of alanine to tRNA(Ala) in a two-step reaction: alanine is first activated by ATP to form Ala-AMP and then transferred to the acceptor end of tRNA(Ala). Also edits incorrectly charged Ser-tRNA(Ala) and Gly-tRNA(Ala) via its editing domain.</text>
</comment>
<comment type="catalytic activity">
    <reaction evidence="1">
        <text>tRNA(Ala) + L-alanine + ATP = L-alanyl-tRNA(Ala) + AMP + diphosphate</text>
        <dbReference type="Rhea" id="RHEA:12540"/>
        <dbReference type="Rhea" id="RHEA-COMP:9657"/>
        <dbReference type="Rhea" id="RHEA-COMP:9923"/>
        <dbReference type="ChEBI" id="CHEBI:30616"/>
        <dbReference type="ChEBI" id="CHEBI:33019"/>
        <dbReference type="ChEBI" id="CHEBI:57972"/>
        <dbReference type="ChEBI" id="CHEBI:78442"/>
        <dbReference type="ChEBI" id="CHEBI:78497"/>
        <dbReference type="ChEBI" id="CHEBI:456215"/>
        <dbReference type="EC" id="6.1.1.7"/>
    </reaction>
</comment>
<comment type="cofactor">
    <cofactor evidence="1">
        <name>Zn(2+)</name>
        <dbReference type="ChEBI" id="CHEBI:29105"/>
    </cofactor>
    <text evidence="1">Binds 1 zinc ion per subunit.</text>
</comment>
<comment type="subcellular location">
    <subcellularLocation>
        <location evidence="1">Cytoplasm</location>
    </subcellularLocation>
</comment>
<comment type="domain">
    <text evidence="1">Consists of three domains; the N-terminal catalytic domain, the editing domain and the C-terminal C-Ala domain. The editing domain removes incorrectly charged amino acids, while the C-Ala domain, along with tRNA(Ala), serves as a bridge to cooperatively bring together the editing and aminoacylation centers thus stimulating deacylation of misacylated tRNAs.</text>
</comment>
<comment type="similarity">
    <text evidence="1">Belongs to the class-II aminoacyl-tRNA synthetase family.</text>
</comment>
<comment type="sequence caution" evidence="2">
    <conflict type="erroneous initiation">
        <sequence resource="EMBL-CDS" id="ABM24110"/>
    </conflict>
</comment>
<feature type="chain" id="PRO_0000347794" description="Alanine--tRNA ligase">
    <location>
        <begin position="1"/>
        <end position="874"/>
    </location>
</feature>
<feature type="binding site" evidence="1">
    <location>
        <position position="562"/>
    </location>
    <ligand>
        <name>Zn(2+)</name>
        <dbReference type="ChEBI" id="CHEBI:29105"/>
    </ligand>
</feature>
<feature type="binding site" evidence="1">
    <location>
        <position position="566"/>
    </location>
    <ligand>
        <name>Zn(2+)</name>
        <dbReference type="ChEBI" id="CHEBI:29105"/>
    </ligand>
</feature>
<feature type="binding site" evidence="1">
    <location>
        <position position="664"/>
    </location>
    <ligand>
        <name>Zn(2+)</name>
        <dbReference type="ChEBI" id="CHEBI:29105"/>
    </ligand>
</feature>
<feature type="binding site" evidence="1">
    <location>
        <position position="668"/>
    </location>
    <ligand>
        <name>Zn(2+)</name>
        <dbReference type="ChEBI" id="CHEBI:29105"/>
    </ligand>
</feature>
<accession>A1RHG5</accession>